<protein>
    <recommendedName>
        <fullName evidence="1">tRNA N6-adenosine threonylcarbamoyltransferase</fullName>
        <ecNumber evidence="1">2.3.1.234</ecNumber>
    </recommendedName>
    <alternativeName>
        <fullName evidence="1">N6-L-threonylcarbamoyladenine synthase</fullName>
        <shortName evidence="1">t(6)A synthase</shortName>
    </alternativeName>
    <alternativeName>
        <fullName evidence="1">t(6)A37 threonylcarbamoyladenosine biosynthesis protein TsaD</fullName>
    </alternativeName>
    <alternativeName>
        <fullName evidence="1">tRNA threonylcarbamoyladenosine biosynthesis protein TsaD</fullName>
    </alternativeName>
</protein>
<dbReference type="EC" id="2.3.1.234" evidence="1"/>
<dbReference type="EMBL" id="CP000153">
    <property type="protein sequence ID" value="ABB43412.1"/>
    <property type="molecule type" value="Genomic_DNA"/>
</dbReference>
<dbReference type="RefSeq" id="WP_011371767.1">
    <property type="nucleotide sequence ID" value="NC_007575.1"/>
</dbReference>
<dbReference type="SMR" id="Q30UB9"/>
<dbReference type="STRING" id="326298.Suden_0131"/>
<dbReference type="KEGG" id="tdn:Suden_0131"/>
<dbReference type="eggNOG" id="COG0533">
    <property type="taxonomic scope" value="Bacteria"/>
</dbReference>
<dbReference type="HOGENOM" id="CLU_023208_0_3_7"/>
<dbReference type="OrthoDB" id="9806197at2"/>
<dbReference type="Proteomes" id="UP000002714">
    <property type="component" value="Chromosome"/>
</dbReference>
<dbReference type="GO" id="GO:0005737">
    <property type="term" value="C:cytoplasm"/>
    <property type="evidence" value="ECO:0007669"/>
    <property type="project" value="UniProtKB-SubCell"/>
</dbReference>
<dbReference type="GO" id="GO:0005506">
    <property type="term" value="F:iron ion binding"/>
    <property type="evidence" value="ECO:0007669"/>
    <property type="project" value="UniProtKB-UniRule"/>
</dbReference>
<dbReference type="GO" id="GO:0061711">
    <property type="term" value="F:N(6)-L-threonylcarbamoyladenine synthase activity"/>
    <property type="evidence" value="ECO:0007669"/>
    <property type="project" value="UniProtKB-EC"/>
</dbReference>
<dbReference type="GO" id="GO:0002949">
    <property type="term" value="P:tRNA threonylcarbamoyladenosine modification"/>
    <property type="evidence" value="ECO:0007669"/>
    <property type="project" value="UniProtKB-UniRule"/>
</dbReference>
<dbReference type="Gene3D" id="3.30.420.40">
    <property type="match status" value="2"/>
</dbReference>
<dbReference type="HAMAP" id="MF_01445">
    <property type="entry name" value="TsaD"/>
    <property type="match status" value="1"/>
</dbReference>
<dbReference type="InterPro" id="IPR043129">
    <property type="entry name" value="ATPase_NBD"/>
</dbReference>
<dbReference type="InterPro" id="IPR000905">
    <property type="entry name" value="Gcp-like_dom"/>
</dbReference>
<dbReference type="InterPro" id="IPR017861">
    <property type="entry name" value="KAE1/TsaD"/>
</dbReference>
<dbReference type="InterPro" id="IPR017860">
    <property type="entry name" value="Peptidase_M22_CS"/>
</dbReference>
<dbReference type="InterPro" id="IPR022450">
    <property type="entry name" value="TsaD"/>
</dbReference>
<dbReference type="NCBIfam" id="TIGR00329">
    <property type="entry name" value="gcp_kae1"/>
    <property type="match status" value="1"/>
</dbReference>
<dbReference type="NCBIfam" id="TIGR03723">
    <property type="entry name" value="T6A_TsaD_YgjD"/>
    <property type="match status" value="1"/>
</dbReference>
<dbReference type="PANTHER" id="PTHR11735">
    <property type="entry name" value="TRNA N6-ADENOSINE THREONYLCARBAMOYLTRANSFERASE"/>
    <property type="match status" value="1"/>
</dbReference>
<dbReference type="PANTHER" id="PTHR11735:SF6">
    <property type="entry name" value="TRNA N6-ADENOSINE THREONYLCARBAMOYLTRANSFERASE, MITOCHONDRIAL"/>
    <property type="match status" value="1"/>
</dbReference>
<dbReference type="Pfam" id="PF00814">
    <property type="entry name" value="TsaD"/>
    <property type="match status" value="1"/>
</dbReference>
<dbReference type="PRINTS" id="PR00789">
    <property type="entry name" value="OSIALOPTASE"/>
</dbReference>
<dbReference type="SUPFAM" id="SSF53067">
    <property type="entry name" value="Actin-like ATPase domain"/>
    <property type="match status" value="2"/>
</dbReference>
<dbReference type="PROSITE" id="PS01016">
    <property type="entry name" value="GLYCOPROTEASE"/>
    <property type="match status" value="1"/>
</dbReference>
<gene>
    <name evidence="1" type="primary">tsaD</name>
    <name type="synonym">gcp</name>
    <name type="ordered locus">Suden_0131</name>
</gene>
<reference key="1">
    <citation type="journal article" date="2008" name="Appl. Environ. Microbiol.">
        <title>Genome of the epsilonproteobacterial chemolithoautotroph Sulfurimonas denitrificans.</title>
        <authorList>
            <person name="Sievert S.M."/>
            <person name="Scott K.M."/>
            <person name="Klotz M.G."/>
            <person name="Chain P.S.G."/>
            <person name="Hauser L.J."/>
            <person name="Hemp J."/>
            <person name="Huegler M."/>
            <person name="Land M."/>
            <person name="Lapidus A."/>
            <person name="Larimer F.W."/>
            <person name="Lucas S."/>
            <person name="Malfatti S.A."/>
            <person name="Meyer F."/>
            <person name="Paulsen I.T."/>
            <person name="Ren Q."/>
            <person name="Simon J."/>
            <person name="Bailey K."/>
            <person name="Diaz E."/>
            <person name="Fitzpatrick K.A."/>
            <person name="Glover B."/>
            <person name="Gwatney N."/>
            <person name="Korajkic A."/>
            <person name="Long A."/>
            <person name="Mobberley J.M."/>
            <person name="Pantry S.N."/>
            <person name="Pazder G."/>
            <person name="Peterson S."/>
            <person name="Quintanilla J.D."/>
            <person name="Sprinkle R."/>
            <person name="Stephens J."/>
            <person name="Thomas P."/>
            <person name="Vaughn R."/>
            <person name="Weber M.J."/>
            <person name="Wooten L.L."/>
        </authorList>
    </citation>
    <scope>NUCLEOTIDE SEQUENCE [LARGE SCALE GENOMIC DNA]</scope>
    <source>
        <strain>ATCC 33889 / DSM 1251</strain>
    </source>
</reference>
<feature type="chain" id="PRO_0000303600" description="tRNA N6-adenosine threonylcarbamoyltransferase">
    <location>
        <begin position="1"/>
        <end position="325"/>
    </location>
</feature>
<feature type="binding site" evidence="1">
    <location>
        <position position="107"/>
    </location>
    <ligand>
        <name>Fe cation</name>
        <dbReference type="ChEBI" id="CHEBI:24875"/>
    </ligand>
</feature>
<feature type="binding site" evidence="1">
    <location>
        <position position="111"/>
    </location>
    <ligand>
        <name>Fe cation</name>
        <dbReference type="ChEBI" id="CHEBI:24875"/>
    </ligand>
</feature>
<feature type="binding site" evidence="1">
    <location>
        <begin position="129"/>
        <end position="133"/>
    </location>
    <ligand>
        <name>substrate</name>
    </ligand>
</feature>
<feature type="binding site" evidence="1">
    <location>
        <position position="162"/>
    </location>
    <ligand>
        <name>substrate</name>
    </ligand>
</feature>
<feature type="binding site" evidence="1">
    <location>
        <position position="175"/>
    </location>
    <ligand>
        <name>substrate</name>
    </ligand>
</feature>
<feature type="binding site" evidence="1">
    <location>
        <position position="265"/>
    </location>
    <ligand>
        <name>substrate</name>
    </ligand>
</feature>
<feature type="binding site" evidence="1">
    <location>
        <position position="293"/>
    </location>
    <ligand>
        <name>Fe cation</name>
        <dbReference type="ChEBI" id="CHEBI:24875"/>
    </ligand>
</feature>
<proteinExistence type="inferred from homology"/>
<organism>
    <name type="scientific">Sulfurimonas denitrificans (strain ATCC 33889 / DSM 1251)</name>
    <name type="common">Thiomicrospira denitrificans (strain ATCC 33889 / DSM 1251)</name>
    <dbReference type="NCBI Taxonomy" id="326298"/>
    <lineage>
        <taxon>Bacteria</taxon>
        <taxon>Pseudomonadati</taxon>
        <taxon>Campylobacterota</taxon>
        <taxon>Epsilonproteobacteria</taxon>
        <taxon>Campylobacterales</taxon>
        <taxon>Sulfurimonadaceae</taxon>
        <taxon>Sulfurimonas</taxon>
    </lineage>
</organism>
<keyword id="KW-0012">Acyltransferase</keyword>
<keyword id="KW-0963">Cytoplasm</keyword>
<keyword id="KW-0408">Iron</keyword>
<keyword id="KW-0479">Metal-binding</keyword>
<keyword id="KW-1185">Reference proteome</keyword>
<keyword id="KW-0808">Transferase</keyword>
<keyword id="KW-0819">tRNA processing</keyword>
<evidence type="ECO:0000255" key="1">
    <source>
        <dbReference type="HAMAP-Rule" id="MF_01445"/>
    </source>
</evidence>
<comment type="function">
    <text evidence="1">Required for the formation of a threonylcarbamoyl group on adenosine at position 37 (t(6)A37) in tRNAs that read codons beginning with adenine. Is involved in the transfer of the threonylcarbamoyl moiety of threonylcarbamoyl-AMP (TC-AMP) to the N6 group of A37, together with TsaE and TsaB. TsaD likely plays a direct catalytic role in this reaction.</text>
</comment>
<comment type="catalytic activity">
    <reaction evidence="1">
        <text>L-threonylcarbamoyladenylate + adenosine(37) in tRNA = N(6)-L-threonylcarbamoyladenosine(37) in tRNA + AMP + H(+)</text>
        <dbReference type="Rhea" id="RHEA:37059"/>
        <dbReference type="Rhea" id="RHEA-COMP:10162"/>
        <dbReference type="Rhea" id="RHEA-COMP:10163"/>
        <dbReference type="ChEBI" id="CHEBI:15378"/>
        <dbReference type="ChEBI" id="CHEBI:73682"/>
        <dbReference type="ChEBI" id="CHEBI:74411"/>
        <dbReference type="ChEBI" id="CHEBI:74418"/>
        <dbReference type="ChEBI" id="CHEBI:456215"/>
        <dbReference type="EC" id="2.3.1.234"/>
    </reaction>
</comment>
<comment type="cofactor">
    <cofactor evidence="1">
        <name>Fe(2+)</name>
        <dbReference type="ChEBI" id="CHEBI:29033"/>
    </cofactor>
    <text evidence="1">Binds 1 Fe(2+) ion per subunit.</text>
</comment>
<comment type="subcellular location">
    <subcellularLocation>
        <location evidence="1">Cytoplasm</location>
    </subcellularLocation>
</comment>
<comment type="similarity">
    <text evidence="1">Belongs to the KAE1 / TsaD family.</text>
</comment>
<name>TSAD_SULDN</name>
<sequence>MILSIESSCDDSAIAITEIATNRLLFHKKISQELEHSVYGGVVPELAARLHAEALPRILEECNPYFKDLKAVAVTTTPGLSVTLVEGVTMAKAISIALNIPIIGVNHLVGHIYSLFIEKESYFPLTVLLVSGGHTQVMEVKSFTEIKTVAKSMDDSFGESFDKVAKMMNLGYPGGPVIEALAKGGDRKRYNFTVPLFQSPLIAFSYSGLKNSVRLAVEAANEEDFKDIAASFEHIATAHIIQKLKKYFKEVPPKTFAIVGGASANLYLRSSIEELLKPHGADLLLSELKYCSDNAAMIGRVAVEMYKESLFSDLSSLEVCPKSVI</sequence>
<accession>Q30UB9</accession>